<protein>
    <recommendedName>
        <fullName>Killer cell lectin-like receptor subfamily B member 1A</fullName>
        <shortName>NKR-P1A</shortName>
    </recommendedName>
    <alternativeName>
        <fullName>CD161 antigen-like family member A</fullName>
    </alternativeName>
    <alternativeName>
        <fullName>Lymphocyte antigen 55A</fullName>
        <shortName>Ly-55A</shortName>
    </alternativeName>
    <alternativeName>
        <fullName>NKR-P1.7</fullName>
    </alternativeName>
    <alternativeName>
        <fullName>Natural killer cell surface protein P1-2</fullName>
        <shortName>NKR-P1 2</shortName>
    </alternativeName>
    <cdAntigenName>CD161a</cdAntigenName>
</protein>
<name>KLRBA_MOUSE</name>
<gene>
    <name type="primary">Klrb1a</name>
    <name type="synonym">Ly55</name>
    <name type="synonym">Ly55a</name>
    <name type="synonym">Nkrp1a</name>
</gene>
<evidence type="ECO:0000250" key="1"/>
<evidence type="ECO:0000255" key="2"/>
<evidence type="ECO:0000255" key="3">
    <source>
        <dbReference type="PROSITE-ProRule" id="PRU00040"/>
    </source>
</evidence>
<evidence type="ECO:0000269" key="4">
    <source>
    </source>
</evidence>
<evidence type="ECO:0000269" key="5">
    <source>
    </source>
</evidence>
<evidence type="ECO:0000305" key="6"/>
<evidence type="ECO:0007829" key="7">
    <source>
        <dbReference type="PDB" id="2M94"/>
    </source>
</evidence>
<evidence type="ECO:0007829" key="8">
    <source>
        <dbReference type="PDB" id="3M9Z"/>
    </source>
</evidence>
<proteinExistence type="evidence at protein level"/>
<keyword id="KW-0002">3D-structure</keyword>
<keyword id="KW-1015">Disulfide bond</keyword>
<keyword id="KW-0430">Lectin</keyword>
<keyword id="KW-0472">Membrane</keyword>
<keyword id="KW-0675">Receptor</keyword>
<keyword id="KW-1185">Reference proteome</keyword>
<keyword id="KW-0735">Signal-anchor</keyword>
<keyword id="KW-0812">Transmembrane</keyword>
<keyword id="KW-1133">Transmembrane helix</keyword>
<comment type="function">
    <text evidence="4">Plays a stimulatory role on natural killer (NK) cell cytotoxicity.</text>
</comment>
<comment type="subunit">
    <text evidence="1">Homodimer; disulfide-linked. Interacts with tyrosine kinase LCK (By similarity).</text>
</comment>
<comment type="subcellular location">
    <subcellularLocation>
        <location>Membrane</location>
        <topology>Single-pass type II membrane protein</topology>
    </subcellularLocation>
</comment>
<comment type="tissue specificity">
    <text>Expressed in natural killer cells.</text>
</comment>
<accession>P27811</accession>
<accession>Q1AG01</accession>
<accession>Q1WJB8</accession>
<accession>Q61972</accession>
<accession>Q61973</accession>
<accession>Q91V25</accession>
<accession>Q925G4</accession>
<organism>
    <name type="scientific">Mus musculus</name>
    <name type="common">Mouse</name>
    <dbReference type="NCBI Taxonomy" id="10090"/>
    <lineage>
        <taxon>Eukaryota</taxon>
        <taxon>Metazoa</taxon>
        <taxon>Chordata</taxon>
        <taxon>Craniata</taxon>
        <taxon>Vertebrata</taxon>
        <taxon>Euteleostomi</taxon>
        <taxon>Mammalia</taxon>
        <taxon>Eutheria</taxon>
        <taxon>Euarchontoglires</taxon>
        <taxon>Glires</taxon>
        <taxon>Rodentia</taxon>
        <taxon>Myomorpha</taxon>
        <taxon>Muroidea</taxon>
        <taxon>Muridae</taxon>
        <taxon>Murinae</taxon>
        <taxon>Mus</taxon>
        <taxon>Mus</taxon>
    </lineage>
</organism>
<feature type="chain" id="PRO_0000046675" description="Killer cell lectin-like receptor subfamily B member 1A">
    <location>
        <begin position="1"/>
        <end position="227"/>
    </location>
</feature>
<feature type="topological domain" description="Cytoplasmic" evidence="2">
    <location>
        <begin position="1"/>
        <end position="45"/>
    </location>
</feature>
<feature type="transmembrane region" description="Helical; Signal-anchor for type II membrane protein" evidence="2">
    <location>
        <begin position="46"/>
        <end position="66"/>
    </location>
</feature>
<feature type="topological domain" description="Extracellular" evidence="2">
    <location>
        <begin position="67"/>
        <end position="227"/>
    </location>
</feature>
<feature type="domain" description="C-type lectin" evidence="3">
    <location>
        <begin position="93"/>
        <end position="212"/>
    </location>
</feature>
<feature type="short sequence motif" description="LCK-binding motif" evidence="1">
    <location>
        <begin position="31"/>
        <end position="34"/>
    </location>
</feature>
<feature type="disulfide bond" evidence="3 5">
    <location>
        <begin position="94"/>
        <end position="105"/>
    </location>
</feature>
<feature type="disulfide bond" evidence="3 5">
    <location>
        <begin position="122"/>
        <end position="210"/>
    </location>
</feature>
<feature type="disulfide bond" evidence="3 5">
    <location>
        <begin position="189"/>
        <end position="202"/>
    </location>
</feature>
<feature type="sequence conflict" description="In Ref. 1; AAA39822 and 3; CAA45971." evidence="6" ref="1 3">
    <original>L</original>
    <variation>S</variation>
    <location>
        <position position="39"/>
    </location>
</feature>
<feature type="sequence conflict" description="In Ref. 3; CAA45976." evidence="6" ref="3">
    <original>I</original>
    <variation>T</variation>
    <location>
        <position position="56"/>
    </location>
</feature>
<feature type="sequence conflict" description="In Ref. 1; AAA39822, 2; AAA39366, 4; AAK39102, 5; AAK83003 and 7; AAI20708." evidence="6" ref="1 2 4 5 7">
    <original>H</original>
    <variation>Q</variation>
    <location>
        <position position="110"/>
    </location>
</feature>
<feature type="sequence conflict" description="In Ref. 4; AAK39101." evidence="6" ref="4">
    <original>E</original>
    <variation>K</variation>
    <location>
        <position position="117"/>
    </location>
</feature>
<feature type="sequence conflict" description="In Ref. 3; CAA45976." evidence="6" ref="3">
    <original>I</original>
    <variation>L</variation>
    <location>
        <position position="168"/>
    </location>
</feature>
<feature type="sequence conflict" description="In Ref. 1; AAA39822, 2; AAA39366, 4; AAK39102, 5; AAK83003 and 7; AAI20708." evidence="6" ref="1 2 4 5 7">
    <original>D</original>
    <variation>G</variation>
    <location>
        <position position="182"/>
    </location>
</feature>
<feature type="sequence conflict" description="In Ref. 4; AAK39101." evidence="6" ref="4">
    <original>E</original>
    <variation>D</variation>
    <location>
        <position position="217"/>
    </location>
</feature>
<feature type="strand" evidence="8">
    <location>
        <begin position="99"/>
        <end position="101"/>
    </location>
</feature>
<feature type="strand" evidence="8">
    <location>
        <begin position="104"/>
        <end position="108"/>
    </location>
</feature>
<feature type="helix" evidence="8">
    <location>
        <begin position="115"/>
        <end position="124"/>
    </location>
</feature>
<feature type="helix" evidence="8">
    <location>
        <begin position="135"/>
        <end position="145"/>
    </location>
</feature>
<feature type="strand" evidence="8">
    <location>
        <begin position="148"/>
        <end position="150"/>
    </location>
</feature>
<feature type="strand" evidence="8">
    <location>
        <begin position="152"/>
        <end position="159"/>
    </location>
</feature>
<feature type="turn" evidence="7">
    <location>
        <begin position="160"/>
        <end position="163"/>
    </location>
</feature>
<feature type="strand" evidence="7">
    <location>
        <begin position="164"/>
        <end position="167"/>
    </location>
</feature>
<feature type="helix" evidence="8">
    <location>
        <begin position="175"/>
        <end position="178"/>
    </location>
</feature>
<feature type="strand" evidence="8">
    <location>
        <begin position="187"/>
        <end position="193"/>
    </location>
</feature>
<feature type="strand" evidence="8">
    <location>
        <begin position="196"/>
        <end position="201"/>
    </location>
</feature>
<feature type="strand" evidence="8">
    <location>
        <begin position="206"/>
        <end position="213"/>
    </location>
</feature>
<dbReference type="EMBL" id="M77676">
    <property type="protein sequence ID" value="AAA39822.1"/>
    <property type="molecule type" value="mRNA"/>
</dbReference>
<dbReference type="EMBL" id="M77753">
    <property type="protein sequence ID" value="AAA39366.1"/>
    <property type="molecule type" value="mRNA"/>
</dbReference>
<dbReference type="EMBL" id="X64716">
    <property type="protein sequence ID" value="CAA45971.1"/>
    <property type="molecule type" value="Genomic_DNA"/>
</dbReference>
<dbReference type="EMBL" id="X64717">
    <property type="protein sequence ID" value="CAA45971.1"/>
    <property type="status" value="JOINED"/>
    <property type="molecule type" value="Genomic_DNA"/>
</dbReference>
<dbReference type="EMBL" id="X64718">
    <property type="protein sequence ID" value="CAA45971.1"/>
    <property type="status" value="JOINED"/>
    <property type="molecule type" value="Genomic_DNA"/>
</dbReference>
<dbReference type="EMBL" id="X64724">
    <property type="protein sequence ID" value="CAA45971.1"/>
    <property type="status" value="JOINED"/>
    <property type="molecule type" value="Genomic_DNA"/>
</dbReference>
<dbReference type="EMBL" id="X64723">
    <property type="protein sequence ID" value="CAA45976.1"/>
    <property type="molecule type" value="mRNA"/>
</dbReference>
<dbReference type="EMBL" id="AF354261">
    <property type="protein sequence ID" value="AAK39101.1"/>
    <property type="molecule type" value="mRNA"/>
</dbReference>
<dbReference type="EMBL" id="AF354262">
    <property type="protein sequence ID" value="AAK39102.1"/>
    <property type="molecule type" value="mRNA"/>
</dbReference>
<dbReference type="EMBL" id="AF285840">
    <property type="protein sequence ID" value="AAK83003.1"/>
    <property type="molecule type" value="Genomic_DNA"/>
</dbReference>
<dbReference type="EMBL" id="AF285839">
    <property type="protein sequence ID" value="AAK83003.1"/>
    <property type="status" value="JOINED"/>
    <property type="molecule type" value="Genomic_DNA"/>
</dbReference>
<dbReference type="EMBL" id="DQ143102">
    <property type="protein sequence ID" value="ABA43353.1"/>
    <property type="molecule type" value="Genomic_DNA"/>
</dbReference>
<dbReference type="EMBL" id="DQ237927">
    <property type="protein sequence ID" value="ABB72025.1"/>
    <property type="molecule type" value="mRNA"/>
</dbReference>
<dbReference type="EMBL" id="BC120707">
    <property type="protein sequence ID" value="AAI20708.1"/>
    <property type="molecule type" value="mRNA"/>
</dbReference>
<dbReference type="PIR" id="A46467">
    <property type="entry name" value="A46467"/>
</dbReference>
<dbReference type="RefSeq" id="NP_001153374.1">
    <property type="nucleotide sequence ID" value="NM_001159902.1"/>
</dbReference>
<dbReference type="RefSeq" id="NP_034867.3">
    <property type="nucleotide sequence ID" value="NM_010737.3"/>
</dbReference>
<dbReference type="PDB" id="2M94">
    <property type="method" value="NMR"/>
    <property type="chains" value="A=89-227"/>
</dbReference>
<dbReference type="PDB" id="3M9Z">
    <property type="method" value="X-ray"/>
    <property type="resolution" value="1.70 A"/>
    <property type="chains" value="A=89-227"/>
</dbReference>
<dbReference type="PDB" id="3T3A">
    <property type="method" value="X-ray"/>
    <property type="resolution" value="2.30 A"/>
    <property type="chains" value="A/B=89-227"/>
</dbReference>
<dbReference type="PDBsum" id="2M94"/>
<dbReference type="PDBsum" id="3M9Z"/>
<dbReference type="PDBsum" id="3T3A"/>
<dbReference type="BMRB" id="P27811"/>
<dbReference type="SMR" id="P27811"/>
<dbReference type="FunCoup" id="P27811">
    <property type="interactions" value="73"/>
</dbReference>
<dbReference type="STRING" id="10090.ENSMUSP00000032512"/>
<dbReference type="PaxDb" id="10090-ENSMUSP00000032512"/>
<dbReference type="ProteomicsDB" id="265010"/>
<dbReference type="DNASU" id="17057"/>
<dbReference type="GeneID" id="17057"/>
<dbReference type="KEGG" id="mmu:17057"/>
<dbReference type="AGR" id="MGI:107540"/>
<dbReference type="CTD" id="17057"/>
<dbReference type="MGI" id="MGI:107540">
    <property type="gene designation" value="Klrb1a"/>
</dbReference>
<dbReference type="eggNOG" id="KOG4297">
    <property type="taxonomic scope" value="Eukaryota"/>
</dbReference>
<dbReference type="InParanoid" id="P27811"/>
<dbReference type="OrthoDB" id="8950604at2759"/>
<dbReference type="PhylomeDB" id="P27811"/>
<dbReference type="BioGRID-ORCS" id="17057">
    <property type="hits" value="3 hits in 75 CRISPR screens"/>
</dbReference>
<dbReference type="EvolutionaryTrace" id="P27811"/>
<dbReference type="PRO" id="PR:P27811"/>
<dbReference type="Proteomes" id="UP000000589">
    <property type="component" value="Unplaced"/>
</dbReference>
<dbReference type="RNAct" id="P27811">
    <property type="molecule type" value="protein"/>
</dbReference>
<dbReference type="GO" id="GO:0005886">
    <property type="term" value="C:plasma membrane"/>
    <property type="evidence" value="ECO:0000314"/>
    <property type="project" value="MGI"/>
</dbReference>
<dbReference type="GO" id="GO:0030246">
    <property type="term" value="F:carbohydrate binding"/>
    <property type="evidence" value="ECO:0007669"/>
    <property type="project" value="UniProtKB-KW"/>
</dbReference>
<dbReference type="CDD" id="cd03593">
    <property type="entry name" value="CLECT_NK_receptors_like"/>
    <property type="match status" value="1"/>
</dbReference>
<dbReference type="FunFam" id="3.10.100.10:FF:000077">
    <property type="entry name" value="Killer cell lectin-like receptor subfamily B member 1A"/>
    <property type="match status" value="1"/>
</dbReference>
<dbReference type="Gene3D" id="3.10.100.10">
    <property type="entry name" value="Mannose-Binding Protein A, subunit A"/>
    <property type="match status" value="1"/>
</dbReference>
<dbReference type="InterPro" id="IPR001304">
    <property type="entry name" value="C-type_lectin-like"/>
</dbReference>
<dbReference type="InterPro" id="IPR016186">
    <property type="entry name" value="C-type_lectin-like/link_sf"/>
</dbReference>
<dbReference type="InterPro" id="IPR016187">
    <property type="entry name" value="CTDL_fold"/>
</dbReference>
<dbReference type="InterPro" id="IPR051527">
    <property type="entry name" value="KLR_subfamily_B"/>
</dbReference>
<dbReference type="InterPro" id="IPR033992">
    <property type="entry name" value="NKR-like_CTLD"/>
</dbReference>
<dbReference type="PANTHER" id="PTHR46784">
    <property type="entry name" value="KILLER CELL LECTIN-LIKE RECEPTOR SUBFAMILY B MEMBER 1"/>
    <property type="match status" value="1"/>
</dbReference>
<dbReference type="PANTHER" id="PTHR46784:SF1">
    <property type="entry name" value="KILLER CELL LECTIN-LIKE RECEPTOR SUBFAMILY B MEMBER 1"/>
    <property type="match status" value="1"/>
</dbReference>
<dbReference type="Pfam" id="PF00059">
    <property type="entry name" value="Lectin_C"/>
    <property type="match status" value="1"/>
</dbReference>
<dbReference type="SMART" id="SM00034">
    <property type="entry name" value="CLECT"/>
    <property type="match status" value="1"/>
</dbReference>
<dbReference type="SUPFAM" id="SSF56436">
    <property type="entry name" value="C-type lectin-like"/>
    <property type="match status" value="1"/>
</dbReference>
<dbReference type="PROSITE" id="PS50041">
    <property type="entry name" value="C_TYPE_LECTIN_2"/>
    <property type="match status" value="1"/>
</dbReference>
<reference key="1">
    <citation type="journal article" date="1991" name="J. Immunol.">
        <title>Mouse NKR-P1. A family of genes selectively coexpressed in adherent lymphokine-activated killer cells.</title>
        <authorList>
            <person name="Giorda R."/>
            <person name="Trucco M."/>
        </authorList>
    </citation>
    <scope>NUCLEOTIDE SEQUENCE [MRNA]</scope>
</reference>
<reference key="2">
    <citation type="journal article" date="1991" name="J. Immunol.">
        <title>cDNA cloning of mouse NKR-P1 and genetic linkage with LY-49. Identification of a natural killer cell gene complex on mouse chromosome 6.</title>
        <authorList>
            <person name="Yokoyama W.M."/>
            <person name="Ryan J.C."/>
            <person name="Hunter J.J."/>
            <person name="Smith H.R.C."/>
            <person name="Stark M."/>
            <person name="Seaman W.E."/>
        </authorList>
    </citation>
    <scope>NUCLEOTIDE SEQUENCE [MRNA]</scope>
</reference>
<reference key="3">
    <citation type="journal article" date="1992" name="J. Immunol.">
        <title>Genomic structure and strain-specific expression of the natural killer cell receptor NKR-P1.</title>
        <authorList>
            <person name="Giorda R."/>
            <person name="Weisberg E.P."/>
            <person name="Ip T.K."/>
            <person name="Trucco M."/>
        </authorList>
    </citation>
    <scope>NUCLEOTIDE SEQUENCE [GENOMIC DNA]</scope>
    <source>
        <strain>BALB/cJ</strain>
    </source>
</reference>
<reference key="4">
    <citation type="journal article" date="1999" name="J. Immunol.">
        <title>The NKR-P1B gene product is an inhibitory receptor on SJL/J NK cells.</title>
        <authorList>
            <person name="Kung S.K.P."/>
            <person name="Su R.-C."/>
            <person name="Shannon J."/>
            <person name="Miller R.G."/>
        </authorList>
    </citation>
    <scope>NUCLEOTIDE SEQUENCE [MRNA]</scope>
    <source>
        <strain>C57BL/6J</strain>
        <strain>SJL/J</strain>
    </source>
</reference>
<reference key="5">
    <citation type="journal article" date="2001" name="Immunogenetics">
        <title>Analysis of a 1-Mb BAC contig overlapping the mouse Nkrp1 cluster of genes: cloning of three new Nkrp1 members, Nkrp1d, Nkrp1e, and Nkrp1f.</title>
        <authorList>
            <person name="Plougastel B."/>
            <person name="Matsumoto K."/>
            <person name="Dubbelde C."/>
            <person name="Yokoyama W.M."/>
        </authorList>
    </citation>
    <scope>NUCLEOTIDE SEQUENCE [GENOMIC DNA]</scope>
    <source>
        <strain>C57BL/6J</strain>
    </source>
</reference>
<reference key="6">
    <citation type="journal article" date="2006" name="J. Immunol.">
        <title>Molecular and genetic basis for strain-dependent NK1.1 alloreactivity of mouse NK cells.</title>
        <authorList>
            <person name="Carlyle J.R."/>
            <person name="Mesci A."/>
            <person name="Ljutic B."/>
            <person name="Belanger S."/>
            <person name="Tai L.-H."/>
            <person name="Rousselle E."/>
            <person name="Troke A.D."/>
            <person name="Proteau M.-F."/>
            <person name="Makrigiannis A.P."/>
        </authorList>
    </citation>
    <scope>NUCLEOTIDE SEQUENCE [MRNA]</scope>
    <scope>FUNCTION</scope>
    <source>
        <strain>BALB/cByJ</strain>
        <strain>BALB/cJ</strain>
        <tissue>Spleen</tissue>
    </source>
</reference>
<reference key="7">
    <citation type="journal article" date="2004" name="Genome Res.">
        <title>The status, quality, and expansion of the NIH full-length cDNA project: the Mammalian Gene Collection (MGC).</title>
        <authorList>
            <consortium name="The MGC Project Team"/>
        </authorList>
    </citation>
    <scope>NUCLEOTIDE SEQUENCE [LARGE SCALE MRNA]</scope>
    <source>
        <tissue>Brain</tissue>
    </source>
</reference>
<reference key="8">
    <citation type="journal article" date="2011" name="J. Struct. Biol.">
        <title>Molecular architecture of mouse activating NKR-P1 receptors.</title>
        <authorList>
            <person name="Kolenko P."/>
            <person name="Rozbesky D."/>
            <person name="Vanek O."/>
            <person name="Kopecky V. Jr."/>
            <person name="Hofbauerova K."/>
            <person name="Novak P."/>
            <person name="Pompach P."/>
            <person name="Hasek J."/>
            <person name="Skalova T."/>
            <person name="Bezouska K."/>
            <person name="Dohnalek J."/>
        </authorList>
    </citation>
    <scope>X-RAY CRYSTALLOGRAPHY (1.7 ANGSTROMS) OF 89-227</scope>
    <scope>SUBUNIT</scope>
    <scope>DISULFIDE BONDS</scope>
</reference>
<sequence>MDTARVYFGLKPPRTPGAWHESPPSLPPDACRCPRSHRLALKLSCAGLILLVVTLIGMSVLVRVLIQKPSIEKCYVLIQENLNKTTDCSAKLECPQDWLSHRDKCFHVSHVSNTWEEGLVDCDGKGATLMLIQDQEELRFLLDSIKEKYNSFWIGLRYTLPDMNWKWINGSTLNSDVLKITDDTENDSCAAISGDKVTFESCNSDNRWICQKELYHETLSNYVGYGH</sequence>